<sequence>MYLLVDVGNTHSVFSITEDGKTFRRWRLSTGVFQTEDELFSHLHPLLGDTMREIKGIGVASVVPTQNTVIERFSQKYFHISPIWVKAKDGCVKWNVKNPSEVGADRVANVVAFVKEYGKNGIIIDMGTATTVDLVVNGSYEGGAILPGLFMMVHSLFRGTAKLPLVEVKPADFVVGKDTEENIRLGVVNGSVYALEGIIGRMKEVYGDLPVVLTGGQSKIVKDMIKHEIFDEDLTIKGVYHFCFGD</sequence>
<keyword id="KW-0067">ATP-binding</keyword>
<keyword id="KW-0173">Coenzyme A biosynthesis</keyword>
<keyword id="KW-0963">Cytoplasm</keyword>
<keyword id="KW-0418">Kinase</keyword>
<keyword id="KW-0479">Metal-binding</keyword>
<keyword id="KW-0547">Nucleotide-binding</keyword>
<keyword id="KW-0630">Potassium</keyword>
<keyword id="KW-0808">Transferase</keyword>
<gene>
    <name evidence="1" type="primary">coaX</name>
    <name type="ordered locus">TRQ2_0044</name>
</gene>
<name>COAX_THESQ</name>
<proteinExistence type="inferred from homology"/>
<accession>B1LCE8</accession>
<comment type="function">
    <text evidence="1">Catalyzes the phosphorylation of pantothenate (Pan), the first step in CoA biosynthesis.</text>
</comment>
<comment type="catalytic activity">
    <reaction evidence="1">
        <text>(R)-pantothenate + ATP = (R)-4'-phosphopantothenate + ADP + H(+)</text>
        <dbReference type="Rhea" id="RHEA:16373"/>
        <dbReference type="ChEBI" id="CHEBI:10986"/>
        <dbReference type="ChEBI" id="CHEBI:15378"/>
        <dbReference type="ChEBI" id="CHEBI:29032"/>
        <dbReference type="ChEBI" id="CHEBI:30616"/>
        <dbReference type="ChEBI" id="CHEBI:456216"/>
        <dbReference type="EC" id="2.7.1.33"/>
    </reaction>
</comment>
<comment type="cofactor">
    <cofactor evidence="1">
        <name>NH4(+)</name>
        <dbReference type="ChEBI" id="CHEBI:28938"/>
    </cofactor>
    <cofactor evidence="1">
        <name>K(+)</name>
        <dbReference type="ChEBI" id="CHEBI:29103"/>
    </cofactor>
    <text evidence="1">A monovalent cation. Ammonium or potassium.</text>
</comment>
<comment type="pathway">
    <text evidence="1">Cofactor biosynthesis; coenzyme A biosynthesis; CoA from (R)-pantothenate: step 1/5.</text>
</comment>
<comment type="subunit">
    <text evidence="1">Homodimer.</text>
</comment>
<comment type="subcellular location">
    <subcellularLocation>
        <location evidence="1">Cytoplasm</location>
    </subcellularLocation>
</comment>
<comment type="similarity">
    <text evidence="1">Belongs to the type III pantothenate kinase family.</text>
</comment>
<dbReference type="EC" id="2.7.1.33" evidence="1"/>
<dbReference type="EMBL" id="CP000969">
    <property type="protein sequence ID" value="ACB08406.1"/>
    <property type="molecule type" value="Genomic_DNA"/>
</dbReference>
<dbReference type="RefSeq" id="WP_012310281.1">
    <property type="nucleotide sequence ID" value="NC_010483.1"/>
</dbReference>
<dbReference type="SMR" id="B1LCE8"/>
<dbReference type="KEGG" id="trq:TRQ2_0044"/>
<dbReference type="HOGENOM" id="CLU_066627_1_1_0"/>
<dbReference type="UniPathway" id="UPA00241">
    <property type="reaction ID" value="UER00352"/>
</dbReference>
<dbReference type="Proteomes" id="UP000001687">
    <property type="component" value="Chromosome"/>
</dbReference>
<dbReference type="GO" id="GO:0005737">
    <property type="term" value="C:cytoplasm"/>
    <property type="evidence" value="ECO:0007669"/>
    <property type="project" value="UniProtKB-SubCell"/>
</dbReference>
<dbReference type="GO" id="GO:0005524">
    <property type="term" value="F:ATP binding"/>
    <property type="evidence" value="ECO:0007669"/>
    <property type="project" value="UniProtKB-UniRule"/>
</dbReference>
<dbReference type="GO" id="GO:0046872">
    <property type="term" value="F:metal ion binding"/>
    <property type="evidence" value="ECO:0007669"/>
    <property type="project" value="UniProtKB-KW"/>
</dbReference>
<dbReference type="GO" id="GO:0004594">
    <property type="term" value="F:pantothenate kinase activity"/>
    <property type="evidence" value="ECO:0007669"/>
    <property type="project" value="UniProtKB-UniRule"/>
</dbReference>
<dbReference type="GO" id="GO:0015937">
    <property type="term" value="P:coenzyme A biosynthetic process"/>
    <property type="evidence" value="ECO:0007669"/>
    <property type="project" value="UniProtKB-UniRule"/>
</dbReference>
<dbReference type="CDD" id="cd24015">
    <property type="entry name" value="ASKHA_NBD_PanK-III"/>
    <property type="match status" value="1"/>
</dbReference>
<dbReference type="Gene3D" id="3.30.420.40">
    <property type="match status" value="2"/>
</dbReference>
<dbReference type="HAMAP" id="MF_01274">
    <property type="entry name" value="Pantothen_kinase_3"/>
    <property type="match status" value="1"/>
</dbReference>
<dbReference type="InterPro" id="IPR043129">
    <property type="entry name" value="ATPase_NBD"/>
</dbReference>
<dbReference type="InterPro" id="IPR004619">
    <property type="entry name" value="Type_III_PanK"/>
</dbReference>
<dbReference type="NCBIfam" id="TIGR00671">
    <property type="entry name" value="baf"/>
    <property type="match status" value="1"/>
</dbReference>
<dbReference type="NCBIfam" id="NF009848">
    <property type="entry name" value="PRK13318.1-6"/>
    <property type="match status" value="1"/>
</dbReference>
<dbReference type="PANTHER" id="PTHR34265">
    <property type="entry name" value="TYPE III PANTOTHENATE KINASE"/>
    <property type="match status" value="1"/>
</dbReference>
<dbReference type="PANTHER" id="PTHR34265:SF1">
    <property type="entry name" value="TYPE III PANTOTHENATE KINASE"/>
    <property type="match status" value="1"/>
</dbReference>
<dbReference type="Pfam" id="PF03309">
    <property type="entry name" value="Pan_kinase"/>
    <property type="match status" value="1"/>
</dbReference>
<dbReference type="SUPFAM" id="SSF53067">
    <property type="entry name" value="Actin-like ATPase domain"/>
    <property type="match status" value="2"/>
</dbReference>
<feature type="chain" id="PRO_1000140263" description="Type III pantothenate kinase">
    <location>
        <begin position="1"/>
        <end position="246"/>
    </location>
</feature>
<feature type="active site" description="Proton acceptor" evidence="1">
    <location>
        <position position="105"/>
    </location>
</feature>
<feature type="binding site" evidence="1">
    <location>
        <begin position="6"/>
        <end position="13"/>
    </location>
    <ligand>
        <name>ATP</name>
        <dbReference type="ChEBI" id="CHEBI:30616"/>
    </ligand>
</feature>
<feature type="binding site" evidence="1">
    <location>
        <begin position="103"/>
        <end position="106"/>
    </location>
    <ligand>
        <name>substrate</name>
    </ligand>
</feature>
<feature type="binding site" evidence="1">
    <location>
        <position position="125"/>
    </location>
    <ligand>
        <name>K(+)</name>
        <dbReference type="ChEBI" id="CHEBI:29103"/>
    </ligand>
</feature>
<feature type="binding site" evidence="1">
    <location>
        <position position="128"/>
    </location>
    <ligand>
        <name>ATP</name>
        <dbReference type="ChEBI" id="CHEBI:30616"/>
    </ligand>
</feature>
<feature type="binding site" evidence="1">
    <location>
        <position position="179"/>
    </location>
    <ligand>
        <name>substrate</name>
    </ligand>
</feature>
<organism>
    <name type="scientific">Thermotoga sp. (strain RQ2)</name>
    <dbReference type="NCBI Taxonomy" id="126740"/>
    <lineage>
        <taxon>Bacteria</taxon>
        <taxon>Thermotogati</taxon>
        <taxon>Thermotogota</taxon>
        <taxon>Thermotogae</taxon>
        <taxon>Thermotogales</taxon>
        <taxon>Thermotogaceae</taxon>
        <taxon>Thermotoga</taxon>
    </lineage>
</organism>
<protein>
    <recommendedName>
        <fullName evidence="1">Type III pantothenate kinase</fullName>
        <ecNumber evidence="1">2.7.1.33</ecNumber>
    </recommendedName>
    <alternativeName>
        <fullName evidence="1">PanK-III</fullName>
    </alternativeName>
    <alternativeName>
        <fullName evidence="1">Pantothenic acid kinase</fullName>
    </alternativeName>
</protein>
<evidence type="ECO:0000255" key="1">
    <source>
        <dbReference type="HAMAP-Rule" id="MF_01274"/>
    </source>
</evidence>
<reference key="1">
    <citation type="journal article" date="2011" name="J. Bacteriol.">
        <title>Genome sequence of Thermotoga sp. strain RQ2, a hyperthermophilic bacterium isolated from a geothermally heated region of the seafloor near Ribeira Quente, the Azores.</title>
        <authorList>
            <person name="Swithers K.S."/>
            <person name="DiPippo J.L."/>
            <person name="Bruce D.C."/>
            <person name="Detter C."/>
            <person name="Tapia R."/>
            <person name="Han S."/>
            <person name="Saunders E."/>
            <person name="Goodwin L.A."/>
            <person name="Han J."/>
            <person name="Woyke T."/>
            <person name="Pitluck S."/>
            <person name="Pennacchio L."/>
            <person name="Nolan M."/>
            <person name="Mikhailova N."/>
            <person name="Lykidis A."/>
            <person name="Land M.L."/>
            <person name="Brettin T."/>
            <person name="Stetter K.O."/>
            <person name="Nelson K.E."/>
            <person name="Gogarten J.P."/>
            <person name="Noll K.M."/>
        </authorList>
    </citation>
    <scope>NUCLEOTIDE SEQUENCE [LARGE SCALE GENOMIC DNA]</scope>
    <source>
        <strain>RQ2</strain>
    </source>
</reference>